<protein>
    <recommendedName>
        <fullName evidence="1">Large ribosomal subunit protein bL25</fullName>
    </recommendedName>
    <alternativeName>
        <fullName evidence="2">50S ribosomal protein L25</fullName>
    </alternativeName>
</protein>
<comment type="function">
    <text evidence="1">This is one of the proteins that binds to the 5S RNA in the ribosome where it forms part of the central protuberance.</text>
</comment>
<comment type="subunit">
    <text evidence="1">Part of the 50S ribosomal subunit; part of the 5S rRNA/L5/L18/L25 subcomplex. Contacts the 5S rRNA. Binds to the 5S rRNA independently of L5 and L18.</text>
</comment>
<comment type="similarity">
    <text evidence="1">Belongs to the bacterial ribosomal protein bL25 family.</text>
</comment>
<proteinExistence type="inferred from homology"/>
<reference key="1">
    <citation type="journal article" date="2009" name="PLoS ONE">
        <title>Salmonella paratyphi C: genetic divergence from Salmonella choleraesuis and pathogenic convergence with Salmonella typhi.</title>
        <authorList>
            <person name="Liu W.-Q."/>
            <person name="Feng Y."/>
            <person name="Wang Y."/>
            <person name="Zou Q.-H."/>
            <person name="Chen F."/>
            <person name="Guo J.-T."/>
            <person name="Peng Y.-H."/>
            <person name="Jin Y."/>
            <person name="Li Y.-G."/>
            <person name="Hu S.-N."/>
            <person name="Johnston R.N."/>
            <person name="Liu G.-R."/>
            <person name="Liu S.-L."/>
        </authorList>
    </citation>
    <scope>NUCLEOTIDE SEQUENCE [LARGE SCALE GENOMIC DNA]</scope>
    <source>
        <strain>RKS4594</strain>
    </source>
</reference>
<dbReference type="EMBL" id="CP000857">
    <property type="protein sequence ID" value="ACN45635.1"/>
    <property type="molecule type" value="Genomic_DNA"/>
</dbReference>
<dbReference type="RefSeq" id="WP_000494192.1">
    <property type="nucleotide sequence ID" value="NC_012125.1"/>
</dbReference>
<dbReference type="SMR" id="C0Q0R6"/>
<dbReference type="KEGG" id="sei:SPC_1476"/>
<dbReference type="HOGENOM" id="CLU_137946_0_0_6"/>
<dbReference type="Proteomes" id="UP000001599">
    <property type="component" value="Chromosome"/>
</dbReference>
<dbReference type="GO" id="GO:0022625">
    <property type="term" value="C:cytosolic large ribosomal subunit"/>
    <property type="evidence" value="ECO:0007669"/>
    <property type="project" value="TreeGrafter"/>
</dbReference>
<dbReference type="GO" id="GO:0008097">
    <property type="term" value="F:5S rRNA binding"/>
    <property type="evidence" value="ECO:0007669"/>
    <property type="project" value="InterPro"/>
</dbReference>
<dbReference type="GO" id="GO:0003735">
    <property type="term" value="F:structural constituent of ribosome"/>
    <property type="evidence" value="ECO:0007669"/>
    <property type="project" value="InterPro"/>
</dbReference>
<dbReference type="GO" id="GO:0006412">
    <property type="term" value="P:translation"/>
    <property type="evidence" value="ECO:0007669"/>
    <property type="project" value="UniProtKB-UniRule"/>
</dbReference>
<dbReference type="CDD" id="cd00495">
    <property type="entry name" value="Ribosomal_L25_TL5_CTC"/>
    <property type="match status" value="1"/>
</dbReference>
<dbReference type="FunFam" id="2.40.240.10:FF:000002">
    <property type="entry name" value="50S ribosomal protein L25"/>
    <property type="match status" value="1"/>
</dbReference>
<dbReference type="Gene3D" id="2.40.240.10">
    <property type="entry name" value="Ribosomal Protein L25, Chain P"/>
    <property type="match status" value="1"/>
</dbReference>
<dbReference type="HAMAP" id="MF_01336">
    <property type="entry name" value="Ribosomal_bL25"/>
    <property type="match status" value="1"/>
</dbReference>
<dbReference type="InterPro" id="IPR020056">
    <property type="entry name" value="Rbsml_bL25/Gln-tRNA_synth_N"/>
</dbReference>
<dbReference type="InterPro" id="IPR011035">
    <property type="entry name" value="Ribosomal_bL25/Gln-tRNA_synth"/>
</dbReference>
<dbReference type="InterPro" id="IPR020055">
    <property type="entry name" value="Ribosomal_bL25_short"/>
</dbReference>
<dbReference type="InterPro" id="IPR029751">
    <property type="entry name" value="Ribosomal_L25_dom"/>
</dbReference>
<dbReference type="InterPro" id="IPR020930">
    <property type="entry name" value="Ribosomal_uL5_bac-type"/>
</dbReference>
<dbReference type="NCBIfam" id="NF004612">
    <property type="entry name" value="PRK05943.1"/>
    <property type="match status" value="1"/>
</dbReference>
<dbReference type="PANTHER" id="PTHR33284">
    <property type="entry name" value="RIBOSOMAL PROTEIN L25/GLN-TRNA SYNTHETASE, ANTI-CODON-BINDING DOMAIN-CONTAINING PROTEIN"/>
    <property type="match status" value="1"/>
</dbReference>
<dbReference type="PANTHER" id="PTHR33284:SF1">
    <property type="entry name" value="RIBOSOMAL PROTEIN L25_GLN-TRNA SYNTHETASE, ANTI-CODON-BINDING DOMAIN-CONTAINING PROTEIN"/>
    <property type="match status" value="1"/>
</dbReference>
<dbReference type="Pfam" id="PF01386">
    <property type="entry name" value="Ribosomal_L25p"/>
    <property type="match status" value="1"/>
</dbReference>
<dbReference type="SUPFAM" id="SSF50715">
    <property type="entry name" value="Ribosomal protein L25-like"/>
    <property type="match status" value="1"/>
</dbReference>
<feature type="chain" id="PRO_1000166194" description="Large ribosomal subunit protein bL25">
    <location>
        <begin position="1"/>
        <end position="94"/>
    </location>
</feature>
<evidence type="ECO:0000255" key="1">
    <source>
        <dbReference type="HAMAP-Rule" id="MF_01336"/>
    </source>
</evidence>
<evidence type="ECO:0000305" key="2"/>
<gene>
    <name evidence="1" type="primary">rplY</name>
    <name type="ordered locus">SPC_1476</name>
</gene>
<organism>
    <name type="scientific">Salmonella paratyphi C (strain RKS4594)</name>
    <dbReference type="NCBI Taxonomy" id="476213"/>
    <lineage>
        <taxon>Bacteria</taxon>
        <taxon>Pseudomonadati</taxon>
        <taxon>Pseudomonadota</taxon>
        <taxon>Gammaproteobacteria</taxon>
        <taxon>Enterobacterales</taxon>
        <taxon>Enterobacteriaceae</taxon>
        <taxon>Salmonella</taxon>
    </lineage>
</organism>
<sequence>MFTINAEVRKEQGKGASRRLRAANKFPAIIYGGSEAPIAIELDHDQVMNMQAKAEFYSEVLTLVVDGKEVKVKAQAVQRHAYKPKLTHIDFVRA</sequence>
<name>RL25_SALPC</name>
<keyword id="KW-0687">Ribonucleoprotein</keyword>
<keyword id="KW-0689">Ribosomal protein</keyword>
<keyword id="KW-0694">RNA-binding</keyword>
<keyword id="KW-0699">rRNA-binding</keyword>
<accession>C0Q0R6</accession>